<feature type="chain" id="PRO_0000100024" description="Uncharacterized RNA pseudouridine synthase YtzG">
    <location>
        <begin position="1"/>
        <end position="239"/>
    </location>
</feature>
<feature type="domain" description="S4 RNA-binding" evidence="2">
    <location>
        <begin position="1"/>
        <end position="65"/>
    </location>
</feature>
<feature type="active site" description="Nucleophile" evidence="1">
    <location>
        <position position="103"/>
    </location>
</feature>
<organism>
    <name type="scientific">Bacillus subtilis (strain 168)</name>
    <dbReference type="NCBI Taxonomy" id="224308"/>
    <lineage>
        <taxon>Bacteria</taxon>
        <taxon>Bacillati</taxon>
        <taxon>Bacillota</taxon>
        <taxon>Bacilli</taxon>
        <taxon>Bacillales</taxon>
        <taxon>Bacillaceae</taxon>
        <taxon>Bacillus</taxon>
    </lineage>
</organism>
<protein>
    <recommendedName>
        <fullName>Uncharacterized RNA pseudouridine synthase YtzG</fullName>
        <ecNumber>5.4.99.-</ecNumber>
    </recommendedName>
    <alternativeName>
        <fullName>RNA pseudouridylate synthase</fullName>
    </alternativeName>
    <alternativeName>
        <fullName>RNA-uridine isomerase</fullName>
    </alternativeName>
</protein>
<name>YTZG_BACSU</name>
<gene>
    <name type="primary">ytzG</name>
    <name type="synonym">ytzF</name>
    <name type="ordered locus">BSU30035</name>
    <name type="ORF">BSU30030</name>
    <name type="ORF">BSU30040</name>
</gene>
<dbReference type="EC" id="5.4.99.-"/>
<dbReference type="EMBL" id="AL009126">
    <property type="protein sequence ID" value="CAB14982.2"/>
    <property type="molecule type" value="Genomic_DNA"/>
</dbReference>
<dbReference type="PIR" id="H70004">
    <property type="entry name" value="H70004"/>
</dbReference>
<dbReference type="RefSeq" id="WP_003229226.1">
    <property type="nucleotide sequence ID" value="NZ_OZ025638.1"/>
</dbReference>
<dbReference type="SMR" id="O32068"/>
<dbReference type="FunCoup" id="O32068">
    <property type="interactions" value="382"/>
</dbReference>
<dbReference type="STRING" id="224308.BSU30035"/>
<dbReference type="PaxDb" id="224308-BSU30035"/>
<dbReference type="EnsemblBacteria" id="CAB14982">
    <property type="protein sequence ID" value="CAB14982"/>
    <property type="gene ID" value="BSU_30035"/>
</dbReference>
<dbReference type="GeneID" id="936165"/>
<dbReference type="KEGG" id="bsu:BSU30035"/>
<dbReference type="PATRIC" id="fig|224308.179.peg.3261"/>
<dbReference type="eggNOG" id="COG1187">
    <property type="taxonomic scope" value="Bacteria"/>
</dbReference>
<dbReference type="InParanoid" id="O32068"/>
<dbReference type="OrthoDB" id="9807213at2"/>
<dbReference type="PhylomeDB" id="O32068"/>
<dbReference type="Proteomes" id="UP000001570">
    <property type="component" value="Chromosome"/>
</dbReference>
<dbReference type="GO" id="GO:0003723">
    <property type="term" value="F:RNA binding"/>
    <property type="evidence" value="ECO:0007669"/>
    <property type="project" value="UniProtKB-KW"/>
</dbReference>
<dbReference type="GO" id="GO:0120159">
    <property type="term" value="F:rRNA pseudouridine synthase activity"/>
    <property type="evidence" value="ECO:0007669"/>
    <property type="project" value="UniProtKB-ARBA"/>
</dbReference>
<dbReference type="GO" id="GO:0000455">
    <property type="term" value="P:enzyme-directed rRNA pseudouridine synthesis"/>
    <property type="evidence" value="ECO:0007669"/>
    <property type="project" value="UniProtKB-ARBA"/>
</dbReference>
<dbReference type="CDD" id="cd02553">
    <property type="entry name" value="PseudoU_synth_RsuA"/>
    <property type="match status" value="1"/>
</dbReference>
<dbReference type="CDD" id="cd00165">
    <property type="entry name" value="S4"/>
    <property type="match status" value="1"/>
</dbReference>
<dbReference type="FunFam" id="3.10.290.10:FF:000015">
    <property type="entry name" value="Pseudouridine synthase"/>
    <property type="match status" value="1"/>
</dbReference>
<dbReference type="FunFam" id="3.30.70.1560:FF:000001">
    <property type="entry name" value="Pseudouridine synthase"/>
    <property type="match status" value="1"/>
</dbReference>
<dbReference type="Gene3D" id="3.30.70.1560">
    <property type="entry name" value="Alpha-L RNA-binding motif"/>
    <property type="match status" value="1"/>
</dbReference>
<dbReference type="Gene3D" id="3.30.70.580">
    <property type="entry name" value="Pseudouridine synthase I, catalytic domain, N-terminal subdomain"/>
    <property type="match status" value="1"/>
</dbReference>
<dbReference type="Gene3D" id="3.10.290.10">
    <property type="entry name" value="RNA-binding S4 domain"/>
    <property type="match status" value="1"/>
</dbReference>
<dbReference type="InterPro" id="IPR042092">
    <property type="entry name" value="PsdUridine_s_RsuA/RluB/E/F_cat"/>
</dbReference>
<dbReference type="InterPro" id="IPR020103">
    <property type="entry name" value="PsdUridine_synth_cat_dom_sf"/>
</dbReference>
<dbReference type="InterPro" id="IPR006145">
    <property type="entry name" value="PsdUridine_synth_RsuA/RluA"/>
</dbReference>
<dbReference type="InterPro" id="IPR000748">
    <property type="entry name" value="PsdUridine_synth_RsuA/RluB/E/F"/>
</dbReference>
<dbReference type="InterPro" id="IPR018496">
    <property type="entry name" value="PsdUridine_synth_RsuA/RluB_CS"/>
</dbReference>
<dbReference type="InterPro" id="IPR050343">
    <property type="entry name" value="RsuA_PseudoU_synthase"/>
</dbReference>
<dbReference type="InterPro" id="IPR002942">
    <property type="entry name" value="S4_RNA-bd"/>
</dbReference>
<dbReference type="InterPro" id="IPR036986">
    <property type="entry name" value="S4_RNA-bd_sf"/>
</dbReference>
<dbReference type="InterPro" id="IPR020094">
    <property type="entry name" value="TruA/RsuA/RluB/E/F_N"/>
</dbReference>
<dbReference type="NCBIfam" id="TIGR00093">
    <property type="entry name" value="pseudouridine synthase"/>
    <property type="match status" value="1"/>
</dbReference>
<dbReference type="PANTHER" id="PTHR47683:SF4">
    <property type="entry name" value="PSEUDOURIDINE SYNTHASE"/>
    <property type="match status" value="1"/>
</dbReference>
<dbReference type="PANTHER" id="PTHR47683">
    <property type="entry name" value="PSEUDOURIDINE SYNTHASE FAMILY PROTEIN-RELATED"/>
    <property type="match status" value="1"/>
</dbReference>
<dbReference type="Pfam" id="PF00849">
    <property type="entry name" value="PseudoU_synth_2"/>
    <property type="match status" value="1"/>
</dbReference>
<dbReference type="Pfam" id="PF01479">
    <property type="entry name" value="S4"/>
    <property type="match status" value="1"/>
</dbReference>
<dbReference type="SMART" id="SM00363">
    <property type="entry name" value="S4"/>
    <property type="match status" value="1"/>
</dbReference>
<dbReference type="SUPFAM" id="SSF55174">
    <property type="entry name" value="Alpha-L RNA-binding motif"/>
    <property type="match status" value="1"/>
</dbReference>
<dbReference type="SUPFAM" id="SSF55120">
    <property type="entry name" value="Pseudouridine synthase"/>
    <property type="match status" value="1"/>
</dbReference>
<dbReference type="PROSITE" id="PS01149">
    <property type="entry name" value="PSI_RSU"/>
    <property type="match status" value="1"/>
</dbReference>
<dbReference type="PROSITE" id="PS50889">
    <property type="entry name" value="S4"/>
    <property type="match status" value="1"/>
</dbReference>
<accession>O32068</accession>
<accession>O32069</accession>
<sequence length="239" mass="26790">MRLDKLLANSGYGSRKEVKAVVKAGAVMIDGKPAKDVKEHVDPDTQEVTVYGEPVDYREFIYLMMNKPQGVLSATEDSRQQTVVDLLTPEEMRFEPFPAGRLDKDTEGFLLLTNDGQLAHRLLSPKKHVPKTYEVHLKSQISREDISDLETGVYIEGGYKTKPAKAEIKTNDSGNTVIYLTITEGKYHQVKQMAKAVGNEVVYLKRLSMGRVSLDPALAPGEYRELTEEELHLLNEPQA</sequence>
<evidence type="ECO:0000250" key="1"/>
<evidence type="ECO:0000255" key="2">
    <source>
        <dbReference type="PROSITE-ProRule" id="PRU00182"/>
    </source>
</evidence>
<evidence type="ECO:0000305" key="3"/>
<reference key="1">
    <citation type="journal article" date="1997" name="Nature">
        <title>The complete genome sequence of the Gram-positive bacterium Bacillus subtilis.</title>
        <authorList>
            <person name="Kunst F."/>
            <person name="Ogasawara N."/>
            <person name="Moszer I."/>
            <person name="Albertini A.M."/>
            <person name="Alloni G."/>
            <person name="Azevedo V."/>
            <person name="Bertero M.G."/>
            <person name="Bessieres P."/>
            <person name="Bolotin A."/>
            <person name="Borchert S."/>
            <person name="Borriss R."/>
            <person name="Boursier L."/>
            <person name="Brans A."/>
            <person name="Braun M."/>
            <person name="Brignell S.C."/>
            <person name="Bron S."/>
            <person name="Brouillet S."/>
            <person name="Bruschi C.V."/>
            <person name="Caldwell B."/>
            <person name="Capuano V."/>
            <person name="Carter N.M."/>
            <person name="Choi S.-K."/>
            <person name="Codani J.-J."/>
            <person name="Connerton I.F."/>
            <person name="Cummings N.J."/>
            <person name="Daniel R.A."/>
            <person name="Denizot F."/>
            <person name="Devine K.M."/>
            <person name="Duesterhoeft A."/>
            <person name="Ehrlich S.D."/>
            <person name="Emmerson P.T."/>
            <person name="Entian K.-D."/>
            <person name="Errington J."/>
            <person name="Fabret C."/>
            <person name="Ferrari E."/>
            <person name="Foulger D."/>
            <person name="Fritz C."/>
            <person name="Fujita M."/>
            <person name="Fujita Y."/>
            <person name="Fuma S."/>
            <person name="Galizzi A."/>
            <person name="Galleron N."/>
            <person name="Ghim S.-Y."/>
            <person name="Glaser P."/>
            <person name="Goffeau A."/>
            <person name="Golightly E.J."/>
            <person name="Grandi G."/>
            <person name="Guiseppi G."/>
            <person name="Guy B.J."/>
            <person name="Haga K."/>
            <person name="Haiech J."/>
            <person name="Harwood C.R."/>
            <person name="Henaut A."/>
            <person name="Hilbert H."/>
            <person name="Holsappel S."/>
            <person name="Hosono S."/>
            <person name="Hullo M.-F."/>
            <person name="Itaya M."/>
            <person name="Jones L.-M."/>
            <person name="Joris B."/>
            <person name="Karamata D."/>
            <person name="Kasahara Y."/>
            <person name="Klaerr-Blanchard M."/>
            <person name="Klein C."/>
            <person name="Kobayashi Y."/>
            <person name="Koetter P."/>
            <person name="Koningstein G."/>
            <person name="Krogh S."/>
            <person name="Kumano M."/>
            <person name="Kurita K."/>
            <person name="Lapidus A."/>
            <person name="Lardinois S."/>
            <person name="Lauber J."/>
            <person name="Lazarevic V."/>
            <person name="Lee S.-M."/>
            <person name="Levine A."/>
            <person name="Liu H."/>
            <person name="Masuda S."/>
            <person name="Mauel C."/>
            <person name="Medigue C."/>
            <person name="Medina N."/>
            <person name="Mellado R.P."/>
            <person name="Mizuno M."/>
            <person name="Moestl D."/>
            <person name="Nakai S."/>
            <person name="Noback M."/>
            <person name="Noone D."/>
            <person name="O'Reilly M."/>
            <person name="Ogawa K."/>
            <person name="Ogiwara A."/>
            <person name="Oudega B."/>
            <person name="Park S.-H."/>
            <person name="Parro V."/>
            <person name="Pohl T.M."/>
            <person name="Portetelle D."/>
            <person name="Porwollik S."/>
            <person name="Prescott A.M."/>
            <person name="Presecan E."/>
            <person name="Pujic P."/>
            <person name="Purnelle B."/>
            <person name="Rapoport G."/>
            <person name="Rey M."/>
            <person name="Reynolds S."/>
            <person name="Rieger M."/>
            <person name="Rivolta C."/>
            <person name="Rocha E."/>
            <person name="Roche B."/>
            <person name="Rose M."/>
            <person name="Sadaie Y."/>
            <person name="Sato T."/>
            <person name="Scanlan E."/>
            <person name="Schleich S."/>
            <person name="Schroeter R."/>
            <person name="Scoffone F."/>
            <person name="Sekiguchi J."/>
            <person name="Sekowska A."/>
            <person name="Seror S.J."/>
            <person name="Serror P."/>
            <person name="Shin B.-S."/>
            <person name="Soldo B."/>
            <person name="Sorokin A."/>
            <person name="Tacconi E."/>
            <person name="Takagi T."/>
            <person name="Takahashi H."/>
            <person name="Takemaru K."/>
            <person name="Takeuchi M."/>
            <person name="Tamakoshi A."/>
            <person name="Tanaka T."/>
            <person name="Terpstra P."/>
            <person name="Tognoni A."/>
            <person name="Tosato V."/>
            <person name="Uchiyama S."/>
            <person name="Vandenbol M."/>
            <person name="Vannier F."/>
            <person name="Vassarotti A."/>
            <person name="Viari A."/>
            <person name="Wambutt R."/>
            <person name="Wedler E."/>
            <person name="Wedler H."/>
            <person name="Weitzenegger T."/>
            <person name="Winters P."/>
            <person name="Wipat A."/>
            <person name="Yamamoto H."/>
            <person name="Yamane K."/>
            <person name="Yasumoto K."/>
            <person name="Yata K."/>
            <person name="Yoshida K."/>
            <person name="Yoshikawa H.-F."/>
            <person name="Zumstein E."/>
            <person name="Yoshikawa H."/>
            <person name="Danchin A."/>
        </authorList>
    </citation>
    <scope>NUCLEOTIDE SEQUENCE [LARGE SCALE GENOMIC DNA]</scope>
    <source>
        <strain>168</strain>
    </source>
</reference>
<reference key="2">
    <citation type="journal article" date="2009" name="Microbiology">
        <title>From a consortium sequence to a unified sequence: the Bacillus subtilis 168 reference genome a decade later.</title>
        <authorList>
            <person name="Barbe V."/>
            <person name="Cruveiller S."/>
            <person name="Kunst F."/>
            <person name="Lenoble P."/>
            <person name="Meurice G."/>
            <person name="Sekowska A."/>
            <person name="Vallenet D."/>
            <person name="Wang T."/>
            <person name="Moszer I."/>
            <person name="Medigue C."/>
            <person name="Danchin A."/>
        </authorList>
    </citation>
    <scope>SEQUENCE REVISION</scope>
</reference>
<proteinExistence type="inferred from homology"/>
<keyword id="KW-0413">Isomerase</keyword>
<keyword id="KW-1185">Reference proteome</keyword>
<keyword id="KW-0694">RNA-binding</keyword>
<comment type="catalytic activity">
    <reaction>
        <text>a uridine in RNA = a pseudouridine in RNA</text>
        <dbReference type="Rhea" id="RHEA:48348"/>
        <dbReference type="Rhea" id="RHEA-COMP:12068"/>
        <dbReference type="Rhea" id="RHEA-COMP:12069"/>
        <dbReference type="ChEBI" id="CHEBI:65314"/>
        <dbReference type="ChEBI" id="CHEBI:65315"/>
    </reaction>
</comment>
<comment type="similarity">
    <text evidence="3">Belongs to the pseudouridine synthase RsuA family.</text>
</comment>